<feature type="chain" id="PRO_1000115482" description="ATP-dependent Clp protease adapter protein ClpS">
    <location>
        <begin position="1"/>
        <end position="95"/>
    </location>
</feature>
<comment type="function">
    <text evidence="1">Involved in the modulation of the specificity of the ClpAP-mediated ATP-dependent protein degradation.</text>
</comment>
<comment type="subunit">
    <text evidence="1">Binds to the N-terminal domain of the chaperone ClpA.</text>
</comment>
<comment type="similarity">
    <text evidence="1">Belongs to the ClpS family.</text>
</comment>
<organism>
    <name type="scientific">Synechococcus elongatus (strain ATCC 33912 / PCC 7942 / FACHB-805)</name>
    <name type="common">Anacystis nidulans R2</name>
    <dbReference type="NCBI Taxonomy" id="1140"/>
    <lineage>
        <taxon>Bacteria</taxon>
        <taxon>Bacillati</taxon>
        <taxon>Cyanobacteriota</taxon>
        <taxon>Cyanophyceae</taxon>
        <taxon>Synechococcales</taxon>
        <taxon>Synechococcaceae</taxon>
        <taxon>Synechococcus</taxon>
    </lineage>
</organism>
<protein>
    <recommendedName>
        <fullName evidence="1">ATP-dependent Clp protease adapter protein ClpS</fullName>
    </recommendedName>
</protein>
<gene>
    <name evidence="1" type="primary">clpS</name>
    <name type="ordered locus">Synpcc7942_0690</name>
</gene>
<accession>Q31QE7</accession>
<proteinExistence type="inferred from homology"/>
<name>CLPS_SYNE7</name>
<dbReference type="EMBL" id="CP000100">
    <property type="protein sequence ID" value="ABB56722.1"/>
    <property type="molecule type" value="Genomic_DNA"/>
</dbReference>
<dbReference type="RefSeq" id="WP_011377684.1">
    <property type="nucleotide sequence ID" value="NZ_JACJTX010000005.1"/>
</dbReference>
<dbReference type="SMR" id="Q31QE7"/>
<dbReference type="STRING" id="1140.Synpcc7942_0690"/>
<dbReference type="PaxDb" id="1140-Synpcc7942_0690"/>
<dbReference type="GeneID" id="72429524"/>
<dbReference type="KEGG" id="syf:Synpcc7942_0690"/>
<dbReference type="eggNOG" id="COG2127">
    <property type="taxonomic scope" value="Bacteria"/>
</dbReference>
<dbReference type="HOGENOM" id="CLU_134083_1_1_3"/>
<dbReference type="OrthoDB" id="9796121at2"/>
<dbReference type="BioCyc" id="MetaCyc:SYNPCC7942_0690-MONOMER"/>
<dbReference type="BioCyc" id="SYNEL:SYNPCC7942_0690-MONOMER"/>
<dbReference type="Proteomes" id="UP000889800">
    <property type="component" value="Chromosome"/>
</dbReference>
<dbReference type="GO" id="GO:0030163">
    <property type="term" value="P:protein catabolic process"/>
    <property type="evidence" value="ECO:0007669"/>
    <property type="project" value="InterPro"/>
</dbReference>
<dbReference type="GO" id="GO:0006508">
    <property type="term" value="P:proteolysis"/>
    <property type="evidence" value="ECO:0007669"/>
    <property type="project" value="UniProtKB-UniRule"/>
</dbReference>
<dbReference type="Gene3D" id="3.30.1390.10">
    <property type="match status" value="1"/>
</dbReference>
<dbReference type="HAMAP" id="MF_00302">
    <property type="entry name" value="ClpS"/>
    <property type="match status" value="1"/>
</dbReference>
<dbReference type="InterPro" id="IPR022935">
    <property type="entry name" value="ClpS"/>
</dbReference>
<dbReference type="InterPro" id="IPR003769">
    <property type="entry name" value="ClpS_core"/>
</dbReference>
<dbReference type="InterPro" id="IPR014719">
    <property type="entry name" value="Ribosomal_bL12_C/ClpS-like"/>
</dbReference>
<dbReference type="NCBIfam" id="NF000671">
    <property type="entry name" value="PRK00033.1-4"/>
    <property type="match status" value="1"/>
</dbReference>
<dbReference type="PANTHER" id="PTHR33473:SF19">
    <property type="entry name" value="ATP-DEPENDENT CLP PROTEASE ADAPTER PROTEIN CLPS"/>
    <property type="match status" value="1"/>
</dbReference>
<dbReference type="PANTHER" id="PTHR33473">
    <property type="entry name" value="ATP-DEPENDENT CLP PROTEASE ADAPTER PROTEIN CLPS1, CHLOROPLASTIC"/>
    <property type="match status" value="1"/>
</dbReference>
<dbReference type="Pfam" id="PF02617">
    <property type="entry name" value="ClpS"/>
    <property type="match status" value="1"/>
</dbReference>
<dbReference type="SUPFAM" id="SSF54736">
    <property type="entry name" value="ClpS-like"/>
    <property type="match status" value="1"/>
</dbReference>
<reference key="1">
    <citation type="submission" date="2005-08" db="EMBL/GenBank/DDBJ databases">
        <title>Complete sequence of chromosome 1 of Synechococcus elongatus PCC 7942.</title>
        <authorList>
            <consortium name="US DOE Joint Genome Institute"/>
            <person name="Copeland A."/>
            <person name="Lucas S."/>
            <person name="Lapidus A."/>
            <person name="Barry K."/>
            <person name="Detter J.C."/>
            <person name="Glavina T."/>
            <person name="Hammon N."/>
            <person name="Israni S."/>
            <person name="Pitluck S."/>
            <person name="Schmutz J."/>
            <person name="Larimer F."/>
            <person name="Land M."/>
            <person name="Kyrpides N."/>
            <person name="Lykidis A."/>
            <person name="Golden S."/>
            <person name="Richardson P."/>
        </authorList>
    </citation>
    <scope>NUCLEOTIDE SEQUENCE [LARGE SCALE GENOMIC DNA]</scope>
    <source>
        <strain>ATCC 33912 / PCC 7942 / FACHB-805</strain>
    </source>
</reference>
<keyword id="KW-1185">Reference proteome</keyword>
<sequence>MAVETIQKPETTTKRKIAPRYRVLLHNDDFNPMEYVVMVLMQTVPSLTQPQAVDIMMEAHTNGTGLVITCDIEPAEFYCEQLKSHGLSSSIEPDD</sequence>
<evidence type="ECO:0000255" key="1">
    <source>
        <dbReference type="HAMAP-Rule" id="MF_00302"/>
    </source>
</evidence>